<gene>
    <name evidence="1" type="primary">ppsR</name>
    <name type="ordered locus">ECDH10B_1839</name>
</gene>
<keyword id="KW-0418">Kinase</keyword>
<keyword id="KW-0547">Nucleotide-binding</keyword>
<keyword id="KW-0723">Serine/threonine-protein kinase</keyword>
<keyword id="KW-0808">Transferase</keyword>
<sequence length="277" mass="31211">MDNAVDRHVFYISDGTAITAEVLGHAVMSQFPVTISSITLPFVENESRARAVKDQIDAIYHQTGVRPLVFYSIVLPEIRAIILQSEGFCQDIVQALVAPLQQEMKLDPTPIAHRTHGLNPNNLNKYDARIAAIDYTLAHDDGISLRNLDQAQVILLGVSRCGKTPTSLYLAMQFGIRAANYPFIADDMDNLVLPASLKPLQHKLFGLTIDPERLAAIREERRENSRYASLRQCRMEVAEVEALYRKNQIPWINSTNYSVEEIATKILDIMGLSRRMY</sequence>
<name>PSRP_ECODH</name>
<feature type="chain" id="PRO_1000136470" description="Phosphoenolpyruvate synthase regulatory protein">
    <location>
        <begin position="1"/>
        <end position="277"/>
    </location>
</feature>
<feature type="binding site" evidence="1">
    <location>
        <begin position="157"/>
        <end position="164"/>
    </location>
    <ligand>
        <name>ADP</name>
        <dbReference type="ChEBI" id="CHEBI:456216"/>
    </ligand>
</feature>
<proteinExistence type="inferred from homology"/>
<protein>
    <recommendedName>
        <fullName evidence="1">Phosphoenolpyruvate synthase regulatory protein</fullName>
        <shortName evidence="1">PEP synthase regulatory protein</shortName>
        <shortName evidence="1">PSRP</shortName>
        <ecNumber evidence="1">2.7.11.33</ecNumber>
        <ecNumber evidence="1">2.7.4.28</ecNumber>
    </recommendedName>
    <alternativeName>
        <fullName evidence="1">Pyruvate, water dikinase regulatory protein</fullName>
    </alternativeName>
</protein>
<evidence type="ECO:0000255" key="1">
    <source>
        <dbReference type="HAMAP-Rule" id="MF_01062"/>
    </source>
</evidence>
<accession>B1XG10</accession>
<dbReference type="EC" id="2.7.11.33" evidence="1"/>
<dbReference type="EC" id="2.7.4.28" evidence="1"/>
<dbReference type="EMBL" id="CP000948">
    <property type="protein sequence ID" value="ACB02904.1"/>
    <property type="molecule type" value="Genomic_DNA"/>
</dbReference>
<dbReference type="RefSeq" id="WP_000368046.1">
    <property type="nucleotide sequence ID" value="NC_010473.1"/>
</dbReference>
<dbReference type="SMR" id="B1XG10"/>
<dbReference type="GeneID" id="93775866"/>
<dbReference type="KEGG" id="ecd:ECDH10B_1839"/>
<dbReference type="HOGENOM" id="CLU_046206_1_0_6"/>
<dbReference type="GO" id="GO:0043531">
    <property type="term" value="F:ADP binding"/>
    <property type="evidence" value="ECO:0007669"/>
    <property type="project" value="UniProtKB-UniRule"/>
</dbReference>
<dbReference type="GO" id="GO:0005524">
    <property type="term" value="F:ATP binding"/>
    <property type="evidence" value="ECO:0007669"/>
    <property type="project" value="InterPro"/>
</dbReference>
<dbReference type="GO" id="GO:0016776">
    <property type="term" value="F:phosphotransferase activity, phosphate group as acceptor"/>
    <property type="evidence" value="ECO:0007669"/>
    <property type="project" value="UniProtKB-UniRule"/>
</dbReference>
<dbReference type="GO" id="GO:0004674">
    <property type="term" value="F:protein serine/threonine kinase activity"/>
    <property type="evidence" value="ECO:0007669"/>
    <property type="project" value="UniProtKB-UniRule"/>
</dbReference>
<dbReference type="HAMAP" id="MF_01062">
    <property type="entry name" value="PSRP"/>
    <property type="match status" value="1"/>
</dbReference>
<dbReference type="InterPro" id="IPR005177">
    <property type="entry name" value="Kinase-pyrophosphorylase"/>
</dbReference>
<dbReference type="InterPro" id="IPR026530">
    <property type="entry name" value="PSRP"/>
</dbReference>
<dbReference type="NCBIfam" id="NF003742">
    <property type="entry name" value="PRK05339.1"/>
    <property type="match status" value="1"/>
</dbReference>
<dbReference type="PANTHER" id="PTHR31756">
    <property type="entry name" value="PYRUVATE, PHOSPHATE DIKINASE REGULATORY PROTEIN 1, CHLOROPLASTIC"/>
    <property type="match status" value="1"/>
</dbReference>
<dbReference type="PANTHER" id="PTHR31756:SF3">
    <property type="entry name" value="PYRUVATE, PHOSPHATE DIKINASE REGULATORY PROTEIN 1, CHLOROPLASTIC"/>
    <property type="match status" value="1"/>
</dbReference>
<dbReference type="Pfam" id="PF03618">
    <property type="entry name" value="Kinase-PPPase"/>
    <property type="match status" value="1"/>
</dbReference>
<organism>
    <name type="scientific">Escherichia coli (strain K12 / DH10B)</name>
    <dbReference type="NCBI Taxonomy" id="316385"/>
    <lineage>
        <taxon>Bacteria</taxon>
        <taxon>Pseudomonadati</taxon>
        <taxon>Pseudomonadota</taxon>
        <taxon>Gammaproteobacteria</taxon>
        <taxon>Enterobacterales</taxon>
        <taxon>Enterobacteriaceae</taxon>
        <taxon>Escherichia</taxon>
    </lineage>
</organism>
<comment type="function">
    <text evidence="1">Bifunctional serine/threonine kinase and phosphorylase involved in the regulation of the phosphoenolpyruvate synthase (PEPS) by catalyzing its phosphorylation/dephosphorylation.</text>
</comment>
<comment type="catalytic activity">
    <reaction evidence="1">
        <text>[pyruvate, water dikinase] + ADP = [pyruvate, water dikinase]-phosphate + AMP + H(+)</text>
        <dbReference type="Rhea" id="RHEA:46020"/>
        <dbReference type="Rhea" id="RHEA-COMP:11425"/>
        <dbReference type="Rhea" id="RHEA-COMP:11426"/>
        <dbReference type="ChEBI" id="CHEBI:15378"/>
        <dbReference type="ChEBI" id="CHEBI:43176"/>
        <dbReference type="ChEBI" id="CHEBI:68546"/>
        <dbReference type="ChEBI" id="CHEBI:456215"/>
        <dbReference type="ChEBI" id="CHEBI:456216"/>
        <dbReference type="EC" id="2.7.11.33"/>
    </reaction>
</comment>
<comment type="catalytic activity">
    <reaction evidence="1">
        <text>[pyruvate, water dikinase]-phosphate + phosphate + H(+) = [pyruvate, water dikinase] + diphosphate</text>
        <dbReference type="Rhea" id="RHEA:48580"/>
        <dbReference type="Rhea" id="RHEA-COMP:11425"/>
        <dbReference type="Rhea" id="RHEA-COMP:11426"/>
        <dbReference type="ChEBI" id="CHEBI:15378"/>
        <dbReference type="ChEBI" id="CHEBI:33019"/>
        <dbReference type="ChEBI" id="CHEBI:43176"/>
        <dbReference type="ChEBI" id="CHEBI:43474"/>
        <dbReference type="ChEBI" id="CHEBI:68546"/>
        <dbReference type="EC" id="2.7.4.28"/>
    </reaction>
</comment>
<comment type="similarity">
    <text evidence="1">Belongs to the pyruvate, phosphate/water dikinase regulatory protein family. PSRP subfamily.</text>
</comment>
<reference key="1">
    <citation type="journal article" date="2008" name="J. Bacteriol.">
        <title>The complete genome sequence of Escherichia coli DH10B: insights into the biology of a laboratory workhorse.</title>
        <authorList>
            <person name="Durfee T."/>
            <person name="Nelson R."/>
            <person name="Baldwin S."/>
            <person name="Plunkett G. III"/>
            <person name="Burland V."/>
            <person name="Mau B."/>
            <person name="Petrosino J.F."/>
            <person name="Qin X."/>
            <person name="Muzny D.M."/>
            <person name="Ayele M."/>
            <person name="Gibbs R.A."/>
            <person name="Csorgo B."/>
            <person name="Posfai G."/>
            <person name="Weinstock G.M."/>
            <person name="Blattner F.R."/>
        </authorList>
    </citation>
    <scope>NUCLEOTIDE SEQUENCE [LARGE SCALE GENOMIC DNA]</scope>
    <source>
        <strain>K12 / DH10B</strain>
    </source>
</reference>